<comment type="function">
    <text evidence="1">Cell wall formation.</text>
</comment>
<comment type="catalytic activity">
    <reaction evidence="1">
        <text>UDP-N-acetyl-alpha-D-muramate + L-alanine + ATP = UDP-N-acetyl-alpha-D-muramoyl-L-alanine + ADP + phosphate + H(+)</text>
        <dbReference type="Rhea" id="RHEA:23372"/>
        <dbReference type="ChEBI" id="CHEBI:15378"/>
        <dbReference type="ChEBI" id="CHEBI:30616"/>
        <dbReference type="ChEBI" id="CHEBI:43474"/>
        <dbReference type="ChEBI" id="CHEBI:57972"/>
        <dbReference type="ChEBI" id="CHEBI:70757"/>
        <dbReference type="ChEBI" id="CHEBI:83898"/>
        <dbReference type="ChEBI" id="CHEBI:456216"/>
        <dbReference type="EC" id="6.3.2.8"/>
    </reaction>
</comment>
<comment type="pathway">
    <text evidence="1">Cell wall biogenesis; peptidoglycan biosynthesis.</text>
</comment>
<comment type="subcellular location">
    <subcellularLocation>
        <location evidence="1">Cytoplasm</location>
    </subcellularLocation>
</comment>
<comment type="similarity">
    <text evidence="1">Belongs to the MurCDEF family.</text>
</comment>
<comment type="sequence caution" evidence="2">
    <conflict type="erroneous initiation">
        <sequence resource="EMBL-CDS" id="BAC58724"/>
    </conflict>
</comment>
<dbReference type="EC" id="6.3.2.8" evidence="1"/>
<dbReference type="EMBL" id="BA000031">
    <property type="protein sequence ID" value="BAC58724.1"/>
    <property type="status" value="ALT_INIT"/>
    <property type="molecule type" value="Genomic_DNA"/>
</dbReference>
<dbReference type="RefSeq" id="NP_796840.1">
    <property type="nucleotide sequence ID" value="NC_004603.1"/>
</dbReference>
<dbReference type="RefSeq" id="WP_005458174.1">
    <property type="nucleotide sequence ID" value="NC_004603.1"/>
</dbReference>
<dbReference type="SMR" id="Q87SG3"/>
<dbReference type="GeneID" id="1187929"/>
<dbReference type="KEGG" id="vpa:VP0461"/>
<dbReference type="PATRIC" id="fig|223926.6.peg.439"/>
<dbReference type="eggNOG" id="COG0773">
    <property type="taxonomic scope" value="Bacteria"/>
</dbReference>
<dbReference type="HOGENOM" id="CLU_028104_2_2_6"/>
<dbReference type="UniPathway" id="UPA00219"/>
<dbReference type="Proteomes" id="UP000002493">
    <property type="component" value="Chromosome 1"/>
</dbReference>
<dbReference type="GO" id="GO:0005737">
    <property type="term" value="C:cytoplasm"/>
    <property type="evidence" value="ECO:0007669"/>
    <property type="project" value="UniProtKB-SubCell"/>
</dbReference>
<dbReference type="GO" id="GO:0005524">
    <property type="term" value="F:ATP binding"/>
    <property type="evidence" value="ECO:0007669"/>
    <property type="project" value="UniProtKB-UniRule"/>
</dbReference>
<dbReference type="GO" id="GO:0008763">
    <property type="term" value="F:UDP-N-acetylmuramate-L-alanine ligase activity"/>
    <property type="evidence" value="ECO:0007669"/>
    <property type="project" value="UniProtKB-UniRule"/>
</dbReference>
<dbReference type="GO" id="GO:0051301">
    <property type="term" value="P:cell division"/>
    <property type="evidence" value="ECO:0007669"/>
    <property type="project" value="UniProtKB-KW"/>
</dbReference>
<dbReference type="GO" id="GO:0071555">
    <property type="term" value="P:cell wall organization"/>
    <property type="evidence" value="ECO:0007669"/>
    <property type="project" value="UniProtKB-KW"/>
</dbReference>
<dbReference type="GO" id="GO:0009252">
    <property type="term" value="P:peptidoglycan biosynthetic process"/>
    <property type="evidence" value="ECO:0007669"/>
    <property type="project" value="UniProtKB-UniRule"/>
</dbReference>
<dbReference type="GO" id="GO:0008360">
    <property type="term" value="P:regulation of cell shape"/>
    <property type="evidence" value="ECO:0007669"/>
    <property type="project" value="UniProtKB-KW"/>
</dbReference>
<dbReference type="FunFam" id="3.40.1190.10:FF:000001">
    <property type="entry name" value="UDP-N-acetylmuramate--L-alanine ligase"/>
    <property type="match status" value="1"/>
</dbReference>
<dbReference type="FunFam" id="3.40.50.720:FF:000046">
    <property type="entry name" value="UDP-N-acetylmuramate--L-alanine ligase"/>
    <property type="match status" value="1"/>
</dbReference>
<dbReference type="Gene3D" id="3.90.190.20">
    <property type="entry name" value="Mur ligase, C-terminal domain"/>
    <property type="match status" value="1"/>
</dbReference>
<dbReference type="Gene3D" id="3.40.1190.10">
    <property type="entry name" value="Mur-like, catalytic domain"/>
    <property type="match status" value="1"/>
</dbReference>
<dbReference type="Gene3D" id="3.40.50.720">
    <property type="entry name" value="NAD(P)-binding Rossmann-like Domain"/>
    <property type="match status" value="1"/>
</dbReference>
<dbReference type="HAMAP" id="MF_00046">
    <property type="entry name" value="MurC"/>
    <property type="match status" value="1"/>
</dbReference>
<dbReference type="InterPro" id="IPR036565">
    <property type="entry name" value="Mur-like_cat_sf"/>
</dbReference>
<dbReference type="InterPro" id="IPR004101">
    <property type="entry name" value="Mur_ligase_C"/>
</dbReference>
<dbReference type="InterPro" id="IPR036615">
    <property type="entry name" value="Mur_ligase_C_dom_sf"/>
</dbReference>
<dbReference type="InterPro" id="IPR013221">
    <property type="entry name" value="Mur_ligase_cen"/>
</dbReference>
<dbReference type="InterPro" id="IPR000713">
    <property type="entry name" value="Mur_ligase_N"/>
</dbReference>
<dbReference type="InterPro" id="IPR050061">
    <property type="entry name" value="MurCDEF_pg_biosynth"/>
</dbReference>
<dbReference type="InterPro" id="IPR005758">
    <property type="entry name" value="UDP-N-AcMur_Ala_ligase_MurC"/>
</dbReference>
<dbReference type="NCBIfam" id="TIGR01082">
    <property type="entry name" value="murC"/>
    <property type="match status" value="1"/>
</dbReference>
<dbReference type="PANTHER" id="PTHR43445:SF3">
    <property type="entry name" value="UDP-N-ACETYLMURAMATE--L-ALANINE LIGASE"/>
    <property type="match status" value="1"/>
</dbReference>
<dbReference type="PANTHER" id="PTHR43445">
    <property type="entry name" value="UDP-N-ACETYLMURAMATE--L-ALANINE LIGASE-RELATED"/>
    <property type="match status" value="1"/>
</dbReference>
<dbReference type="Pfam" id="PF01225">
    <property type="entry name" value="Mur_ligase"/>
    <property type="match status" value="1"/>
</dbReference>
<dbReference type="Pfam" id="PF02875">
    <property type="entry name" value="Mur_ligase_C"/>
    <property type="match status" value="1"/>
</dbReference>
<dbReference type="Pfam" id="PF08245">
    <property type="entry name" value="Mur_ligase_M"/>
    <property type="match status" value="1"/>
</dbReference>
<dbReference type="SUPFAM" id="SSF51984">
    <property type="entry name" value="MurCD N-terminal domain"/>
    <property type="match status" value="1"/>
</dbReference>
<dbReference type="SUPFAM" id="SSF53623">
    <property type="entry name" value="MurD-like peptide ligases, catalytic domain"/>
    <property type="match status" value="1"/>
</dbReference>
<dbReference type="SUPFAM" id="SSF53244">
    <property type="entry name" value="MurD-like peptide ligases, peptide-binding domain"/>
    <property type="match status" value="1"/>
</dbReference>
<reference key="1">
    <citation type="journal article" date="2003" name="Lancet">
        <title>Genome sequence of Vibrio parahaemolyticus: a pathogenic mechanism distinct from that of V. cholerae.</title>
        <authorList>
            <person name="Makino K."/>
            <person name="Oshima K."/>
            <person name="Kurokawa K."/>
            <person name="Yokoyama K."/>
            <person name="Uda T."/>
            <person name="Tagomori K."/>
            <person name="Iijima Y."/>
            <person name="Najima M."/>
            <person name="Nakano M."/>
            <person name="Yamashita A."/>
            <person name="Kubota Y."/>
            <person name="Kimura S."/>
            <person name="Yasunaga T."/>
            <person name="Honda T."/>
            <person name="Shinagawa H."/>
            <person name="Hattori M."/>
            <person name="Iida T."/>
        </authorList>
    </citation>
    <scope>NUCLEOTIDE SEQUENCE [LARGE SCALE GENOMIC DNA]</scope>
    <source>
        <strain>RIMD 2210633</strain>
    </source>
</reference>
<sequence>MTIQHTQDLAQIRAMVPEMRRVKCIHFIGIGGAGMSGIAEVLLNEGYEITGSDLSENPVTERLVSKGATVFIGHQASNVEKASVVVVSTAINEENPEVMAARELRIPIVRRAEMLAELMRFRHGIAVAGTHGKTTTTALVTQIYSEAGLDPTFVNGGLVKSAGTNARLGSSRILIAEADESDASFLHLQPMVSIVTNIEADHMDTYGGDFETLKQTFIDFLHNLPFYGQAIVCIDDPVIRELIPRISRQVITYGFSDDADVRIENYHQEGQQGKFTVVRKGRANLDITLNIPGRHNALNASAAIAVATEDDIEDDAILKAMAGTQGTGRRFDHLGEFDTGNGHAMLVDDYGHHPTEVDVTIKAARSGWQDKRLVMIFQPHRYSRTRDLYDDFANVLEQVDVLIMLDVYAAGEKPIAGADGRSLCRTIRSRGKVDPIFVPEIEQLPSVLANVIQDGDLILTQGAGDVGKVAKQLANLELNINKMLG</sequence>
<gene>
    <name evidence="1" type="primary">murC</name>
    <name type="ordered locus">VP0461</name>
</gene>
<accession>Q87SG3</accession>
<organism>
    <name type="scientific">Vibrio parahaemolyticus serotype O3:K6 (strain RIMD 2210633)</name>
    <dbReference type="NCBI Taxonomy" id="223926"/>
    <lineage>
        <taxon>Bacteria</taxon>
        <taxon>Pseudomonadati</taxon>
        <taxon>Pseudomonadota</taxon>
        <taxon>Gammaproteobacteria</taxon>
        <taxon>Vibrionales</taxon>
        <taxon>Vibrionaceae</taxon>
        <taxon>Vibrio</taxon>
    </lineage>
</organism>
<protein>
    <recommendedName>
        <fullName evidence="1">UDP-N-acetylmuramate--L-alanine ligase</fullName>
        <ecNumber evidence="1">6.3.2.8</ecNumber>
    </recommendedName>
    <alternativeName>
        <fullName evidence="1">UDP-N-acetylmuramoyl-L-alanine synthetase</fullName>
    </alternativeName>
</protein>
<keyword id="KW-0067">ATP-binding</keyword>
<keyword id="KW-0131">Cell cycle</keyword>
<keyword id="KW-0132">Cell division</keyword>
<keyword id="KW-0133">Cell shape</keyword>
<keyword id="KW-0961">Cell wall biogenesis/degradation</keyword>
<keyword id="KW-0963">Cytoplasm</keyword>
<keyword id="KW-0436">Ligase</keyword>
<keyword id="KW-0547">Nucleotide-binding</keyword>
<keyword id="KW-0573">Peptidoglycan synthesis</keyword>
<feature type="chain" id="PRO_0000182181" description="UDP-N-acetylmuramate--L-alanine ligase">
    <location>
        <begin position="1"/>
        <end position="485"/>
    </location>
</feature>
<feature type="binding site" evidence="1">
    <location>
        <begin position="129"/>
        <end position="135"/>
    </location>
    <ligand>
        <name>ATP</name>
        <dbReference type="ChEBI" id="CHEBI:30616"/>
    </ligand>
</feature>
<proteinExistence type="inferred from homology"/>
<evidence type="ECO:0000255" key="1">
    <source>
        <dbReference type="HAMAP-Rule" id="MF_00046"/>
    </source>
</evidence>
<evidence type="ECO:0000305" key="2"/>
<name>MURC_VIBPA</name>